<dbReference type="EMBL" id="CP000950">
    <property type="protein sequence ID" value="ACA67725.1"/>
    <property type="molecule type" value="Genomic_DNA"/>
</dbReference>
<dbReference type="RefSeq" id="WP_002227089.1">
    <property type="nucleotide sequence ID" value="NZ_CP009792.1"/>
</dbReference>
<dbReference type="SMR" id="B1JFY9"/>
<dbReference type="GeneID" id="57975708"/>
<dbReference type="KEGG" id="ypy:YPK_1431"/>
<dbReference type="PATRIC" id="fig|502800.11.peg.2069"/>
<dbReference type="GO" id="GO:0032153">
    <property type="term" value="C:cell division site"/>
    <property type="evidence" value="ECO:0007669"/>
    <property type="project" value="UniProtKB-UniRule"/>
</dbReference>
<dbReference type="GO" id="GO:0005886">
    <property type="term" value="C:plasma membrane"/>
    <property type="evidence" value="ECO:0007669"/>
    <property type="project" value="UniProtKB-SubCell"/>
</dbReference>
<dbReference type="GO" id="GO:0000917">
    <property type="term" value="P:division septum assembly"/>
    <property type="evidence" value="ECO:0007669"/>
    <property type="project" value="TreeGrafter"/>
</dbReference>
<dbReference type="GO" id="GO:0043093">
    <property type="term" value="P:FtsZ-dependent cytokinesis"/>
    <property type="evidence" value="ECO:0007669"/>
    <property type="project" value="UniProtKB-UniRule"/>
</dbReference>
<dbReference type="CDD" id="cd00231">
    <property type="entry name" value="ZipA"/>
    <property type="match status" value="1"/>
</dbReference>
<dbReference type="FunFam" id="3.30.1400.10:FF:000001">
    <property type="entry name" value="Cell division protein ZipA"/>
    <property type="match status" value="1"/>
</dbReference>
<dbReference type="Gene3D" id="3.30.1400.10">
    <property type="entry name" value="ZipA, C-terminal FtsZ-binding domain"/>
    <property type="match status" value="1"/>
</dbReference>
<dbReference type="HAMAP" id="MF_00509">
    <property type="entry name" value="ZipA"/>
    <property type="match status" value="1"/>
</dbReference>
<dbReference type="InterPro" id="IPR011919">
    <property type="entry name" value="Cell_div_ZipA"/>
</dbReference>
<dbReference type="InterPro" id="IPR007449">
    <property type="entry name" value="ZipA_FtsZ-bd_C"/>
</dbReference>
<dbReference type="InterPro" id="IPR036765">
    <property type="entry name" value="ZipA_FtsZ-bd_C_sf"/>
</dbReference>
<dbReference type="NCBIfam" id="TIGR02205">
    <property type="entry name" value="septum_zipA"/>
    <property type="match status" value="1"/>
</dbReference>
<dbReference type="PANTHER" id="PTHR38685">
    <property type="entry name" value="CELL DIVISION PROTEIN ZIPA"/>
    <property type="match status" value="1"/>
</dbReference>
<dbReference type="PANTHER" id="PTHR38685:SF1">
    <property type="entry name" value="CELL DIVISION PROTEIN ZIPA"/>
    <property type="match status" value="1"/>
</dbReference>
<dbReference type="Pfam" id="PF04354">
    <property type="entry name" value="ZipA_C"/>
    <property type="match status" value="1"/>
</dbReference>
<dbReference type="SMART" id="SM00771">
    <property type="entry name" value="ZipA_C"/>
    <property type="match status" value="1"/>
</dbReference>
<dbReference type="SUPFAM" id="SSF64383">
    <property type="entry name" value="Cell-division protein ZipA, C-terminal domain"/>
    <property type="match status" value="1"/>
</dbReference>
<reference key="1">
    <citation type="submission" date="2008-02" db="EMBL/GenBank/DDBJ databases">
        <title>Complete sequence of Yersinia pseudotuberculosis YPIII.</title>
        <authorList>
            <consortium name="US DOE Joint Genome Institute"/>
            <person name="Copeland A."/>
            <person name="Lucas S."/>
            <person name="Lapidus A."/>
            <person name="Glavina del Rio T."/>
            <person name="Dalin E."/>
            <person name="Tice H."/>
            <person name="Bruce D."/>
            <person name="Goodwin L."/>
            <person name="Pitluck S."/>
            <person name="Munk A.C."/>
            <person name="Brettin T."/>
            <person name="Detter J.C."/>
            <person name="Han C."/>
            <person name="Tapia R."/>
            <person name="Schmutz J."/>
            <person name="Larimer F."/>
            <person name="Land M."/>
            <person name="Hauser L."/>
            <person name="Challacombe J.F."/>
            <person name="Green L."/>
            <person name="Lindler L.E."/>
            <person name="Nikolich M.P."/>
            <person name="Richardson P."/>
        </authorList>
    </citation>
    <scope>NUCLEOTIDE SEQUENCE [LARGE SCALE GENOMIC DNA]</scope>
    <source>
        <strain>YPIII</strain>
    </source>
</reference>
<keyword id="KW-0131">Cell cycle</keyword>
<keyword id="KW-0132">Cell division</keyword>
<keyword id="KW-0997">Cell inner membrane</keyword>
<keyword id="KW-1003">Cell membrane</keyword>
<keyword id="KW-0472">Membrane</keyword>
<keyword id="KW-0812">Transmembrane</keyword>
<keyword id="KW-1133">Transmembrane helix</keyword>
<feature type="chain" id="PRO_1000127237" description="Cell division protein ZipA">
    <location>
        <begin position="1"/>
        <end position="328"/>
    </location>
</feature>
<feature type="topological domain" description="Periplasmic" evidence="1">
    <location>
        <begin position="1"/>
        <end position="6"/>
    </location>
</feature>
<feature type="transmembrane region" description="Helical" evidence="1">
    <location>
        <begin position="7"/>
        <end position="27"/>
    </location>
</feature>
<feature type="topological domain" description="Cytoplasmic" evidence="1">
    <location>
        <begin position="28"/>
        <end position="328"/>
    </location>
</feature>
<feature type="region of interest" description="Disordered" evidence="2">
    <location>
        <begin position="61"/>
        <end position="183"/>
    </location>
</feature>
<feature type="compositionally biased region" description="Basic and acidic residues" evidence="2">
    <location>
        <begin position="61"/>
        <end position="72"/>
    </location>
</feature>
<feature type="compositionally biased region" description="Polar residues" evidence="2">
    <location>
        <begin position="95"/>
        <end position="104"/>
    </location>
</feature>
<feature type="compositionally biased region" description="Polar residues" evidence="2">
    <location>
        <begin position="164"/>
        <end position="174"/>
    </location>
</feature>
<proteinExistence type="inferred from homology"/>
<protein>
    <recommendedName>
        <fullName evidence="1">Cell division protein ZipA</fullName>
    </recommendedName>
</protein>
<gene>
    <name evidence="1" type="primary">zipA</name>
    <name type="ordered locus">YPK_1431</name>
</gene>
<comment type="function">
    <text evidence="1">Essential cell division protein that stabilizes the FtsZ protofilaments by cross-linking them and that serves as a cytoplasmic membrane anchor for the Z ring. Also required for the recruitment to the septal ring of downstream cell division proteins.</text>
</comment>
<comment type="subunit">
    <text evidence="1">Interacts with FtsZ via their C-terminal domains.</text>
</comment>
<comment type="subcellular location">
    <subcellularLocation>
        <location evidence="1">Cell inner membrane</location>
        <topology evidence="1">Single-pass type I membrane protein</topology>
    </subcellularLocation>
    <text evidence="1">Localizes to the Z ring in an FtsZ-dependent manner.</text>
</comment>
<comment type="similarity">
    <text evidence="1">Belongs to the ZipA family.</text>
</comment>
<sequence length="328" mass="36098">MMQDLRLILIVVGAIAIIALLLHGLWTSRKERSSLFRDRPVKRTKQERVETPIESLDEGVGEVRVRTSHPQEKPSFNHLDDDDDEVPVIQHAETKSAQVKTASRQAPFASVQTDYDDPLLGGLSAEQPPHDLSRDPLLGKADESYSQPQHAEPPHVEKPAHQVAPQQHVESQQEPVAPAPEAKPQKLKETVLVLHVAAHHGGVIGGEVLLQSVLQSGFQFGEMGIFHRHLSPAGSGPVLFSLANMVKPGSFDPDTMSDFSTPGVSMFMMVPSYGDANQNFKLMLQSAQRIADDVGGVVLDDERRMMTPQKLESYKARIREVLDANTIA</sequence>
<evidence type="ECO:0000255" key="1">
    <source>
        <dbReference type="HAMAP-Rule" id="MF_00509"/>
    </source>
</evidence>
<evidence type="ECO:0000256" key="2">
    <source>
        <dbReference type="SAM" id="MobiDB-lite"/>
    </source>
</evidence>
<name>ZIPA_YERPY</name>
<organism>
    <name type="scientific">Yersinia pseudotuberculosis serotype O:3 (strain YPIII)</name>
    <dbReference type="NCBI Taxonomy" id="502800"/>
    <lineage>
        <taxon>Bacteria</taxon>
        <taxon>Pseudomonadati</taxon>
        <taxon>Pseudomonadota</taxon>
        <taxon>Gammaproteobacteria</taxon>
        <taxon>Enterobacterales</taxon>
        <taxon>Yersiniaceae</taxon>
        <taxon>Yersinia</taxon>
    </lineage>
</organism>
<accession>B1JFY9</accession>